<reference key="1">
    <citation type="journal article" date="2009" name="PLoS Genet.">
        <title>Organised genome dynamics in the Escherichia coli species results in highly diverse adaptive paths.</title>
        <authorList>
            <person name="Touchon M."/>
            <person name="Hoede C."/>
            <person name="Tenaillon O."/>
            <person name="Barbe V."/>
            <person name="Baeriswyl S."/>
            <person name="Bidet P."/>
            <person name="Bingen E."/>
            <person name="Bonacorsi S."/>
            <person name="Bouchier C."/>
            <person name="Bouvet O."/>
            <person name="Calteau A."/>
            <person name="Chiapello H."/>
            <person name="Clermont O."/>
            <person name="Cruveiller S."/>
            <person name="Danchin A."/>
            <person name="Diard M."/>
            <person name="Dossat C."/>
            <person name="Karoui M.E."/>
            <person name="Frapy E."/>
            <person name="Garry L."/>
            <person name="Ghigo J.M."/>
            <person name="Gilles A.M."/>
            <person name="Johnson J."/>
            <person name="Le Bouguenec C."/>
            <person name="Lescat M."/>
            <person name="Mangenot S."/>
            <person name="Martinez-Jehanne V."/>
            <person name="Matic I."/>
            <person name="Nassif X."/>
            <person name="Oztas S."/>
            <person name="Petit M.A."/>
            <person name="Pichon C."/>
            <person name="Rouy Z."/>
            <person name="Ruf C.S."/>
            <person name="Schneider D."/>
            <person name="Tourret J."/>
            <person name="Vacherie B."/>
            <person name="Vallenet D."/>
            <person name="Medigue C."/>
            <person name="Rocha E.P.C."/>
            <person name="Denamur E."/>
        </authorList>
    </citation>
    <scope>NUCLEOTIDE SEQUENCE [LARGE SCALE GENOMIC DNA]</scope>
    <source>
        <strain>UMN026 / ExPEC</strain>
    </source>
</reference>
<name>PYRD_ECOLU</name>
<keyword id="KW-1003">Cell membrane</keyword>
<keyword id="KW-0285">Flavoprotein</keyword>
<keyword id="KW-0288">FMN</keyword>
<keyword id="KW-0472">Membrane</keyword>
<keyword id="KW-0560">Oxidoreductase</keyword>
<keyword id="KW-0665">Pyrimidine biosynthesis</keyword>
<gene>
    <name evidence="1" type="primary">pyrD</name>
    <name type="ordered locus">ECUMN_1134</name>
</gene>
<proteinExistence type="inferred from homology"/>
<protein>
    <recommendedName>
        <fullName evidence="1">Dihydroorotate dehydrogenase (quinone)</fullName>
        <ecNumber evidence="1">1.3.5.2</ecNumber>
    </recommendedName>
    <alternativeName>
        <fullName evidence="1">DHOdehase</fullName>
        <shortName evidence="1">DHOD</shortName>
        <shortName evidence="1">DHODase</shortName>
    </alternativeName>
    <alternativeName>
        <fullName evidence="1">Dihydroorotate oxidase</fullName>
    </alternativeName>
</protein>
<accession>B7N3A7</accession>
<organism>
    <name type="scientific">Escherichia coli O17:K52:H18 (strain UMN026 / ExPEC)</name>
    <dbReference type="NCBI Taxonomy" id="585056"/>
    <lineage>
        <taxon>Bacteria</taxon>
        <taxon>Pseudomonadati</taxon>
        <taxon>Pseudomonadota</taxon>
        <taxon>Gammaproteobacteria</taxon>
        <taxon>Enterobacterales</taxon>
        <taxon>Enterobacteriaceae</taxon>
        <taxon>Escherichia</taxon>
    </lineage>
</organism>
<comment type="function">
    <text evidence="1">Catalyzes the conversion of dihydroorotate to orotate with quinone as electron acceptor.</text>
</comment>
<comment type="catalytic activity">
    <reaction evidence="1">
        <text>(S)-dihydroorotate + a quinone = orotate + a quinol</text>
        <dbReference type="Rhea" id="RHEA:30187"/>
        <dbReference type="ChEBI" id="CHEBI:24646"/>
        <dbReference type="ChEBI" id="CHEBI:30839"/>
        <dbReference type="ChEBI" id="CHEBI:30864"/>
        <dbReference type="ChEBI" id="CHEBI:132124"/>
        <dbReference type="EC" id="1.3.5.2"/>
    </reaction>
</comment>
<comment type="cofactor">
    <cofactor evidence="1">
        <name>FMN</name>
        <dbReference type="ChEBI" id="CHEBI:58210"/>
    </cofactor>
    <text evidence="1">Binds 1 FMN per subunit.</text>
</comment>
<comment type="pathway">
    <text evidence="1">Pyrimidine metabolism; UMP biosynthesis via de novo pathway; orotate from (S)-dihydroorotate (quinone route): step 1/1.</text>
</comment>
<comment type="subunit">
    <text evidence="1">Monomer.</text>
</comment>
<comment type="subcellular location">
    <subcellularLocation>
        <location evidence="1">Cell membrane</location>
        <topology evidence="1">Peripheral membrane protein</topology>
    </subcellularLocation>
</comment>
<comment type="similarity">
    <text evidence="1">Belongs to the dihydroorotate dehydrogenase family. Type 2 subfamily.</text>
</comment>
<feature type="chain" id="PRO_1000195072" description="Dihydroorotate dehydrogenase (quinone)">
    <location>
        <begin position="1"/>
        <end position="336"/>
    </location>
</feature>
<feature type="active site" description="Nucleophile" evidence="1">
    <location>
        <position position="175"/>
    </location>
</feature>
<feature type="binding site" evidence="1">
    <location>
        <begin position="62"/>
        <end position="66"/>
    </location>
    <ligand>
        <name>FMN</name>
        <dbReference type="ChEBI" id="CHEBI:58210"/>
    </ligand>
</feature>
<feature type="binding site" evidence="1">
    <location>
        <position position="66"/>
    </location>
    <ligand>
        <name>substrate</name>
    </ligand>
</feature>
<feature type="binding site" evidence="1">
    <location>
        <position position="86"/>
    </location>
    <ligand>
        <name>FMN</name>
        <dbReference type="ChEBI" id="CHEBI:58210"/>
    </ligand>
</feature>
<feature type="binding site" evidence="1">
    <location>
        <begin position="111"/>
        <end position="115"/>
    </location>
    <ligand>
        <name>substrate</name>
    </ligand>
</feature>
<feature type="binding site" evidence="1">
    <location>
        <position position="139"/>
    </location>
    <ligand>
        <name>FMN</name>
        <dbReference type="ChEBI" id="CHEBI:58210"/>
    </ligand>
</feature>
<feature type="binding site" evidence="1">
    <location>
        <position position="172"/>
    </location>
    <ligand>
        <name>FMN</name>
        <dbReference type="ChEBI" id="CHEBI:58210"/>
    </ligand>
</feature>
<feature type="binding site" evidence="1">
    <location>
        <position position="172"/>
    </location>
    <ligand>
        <name>substrate</name>
    </ligand>
</feature>
<feature type="binding site" evidence="1">
    <location>
        <position position="177"/>
    </location>
    <ligand>
        <name>substrate</name>
    </ligand>
</feature>
<feature type="binding site" evidence="1">
    <location>
        <position position="217"/>
    </location>
    <ligand>
        <name>FMN</name>
        <dbReference type="ChEBI" id="CHEBI:58210"/>
    </ligand>
</feature>
<feature type="binding site" evidence="1">
    <location>
        <position position="245"/>
    </location>
    <ligand>
        <name>FMN</name>
        <dbReference type="ChEBI" id="CHEBI:58210"/>
    </ligand>
</feature>
<feature type="binding site" evidence="1">
    <location>
        <begin position="246"/>
        <end position="247"/>
    </location>
    <ligand>
        <name>substrate</name>
    </ligand>
</feature>
<feature type="binding site" evidence="1">
    <location>
        <position position="268"/>
    </location>
    <ligand>
        <name>FMN</name>
        <dbReference type="ChEBI" id="CHEBI:58210"/>
    </ligand>
</feature>
<feature type="binding site" evidence="1">
    <location>
        <position position="297"/>
    </location>
    <ligand>
        <name>FMN</name>
        <dbReference type="ChEBI" id="CHEBI:58210"/>
    </ligand>
</feature>
<feature type="binding site" evidence="1">
    <location>
        <begin position="318"/>
        <end position="319"/>
    </location>
    <ligand>
        <name>FMN</name>
        <dbReference type="ChEBI" id="CHEBI:58210"/>
    </ligand>
</feature>
<sequence>MYYPFVRKALFQLDPERAHEFTFQQLRRITGTPFEALVRQKVPAKPVNCMGLTFKNPLGLAAGLDKDGECIDALGAMGFGSIEIGTVTPRPQPGNDKPRLFRLVDAEGLINRMGFNNLGVDNLVENVKKAHYDGVLGINIGKNKDTPVEQGKDDYLICMEKIYAYAGYIAINISSPNTPGLRTLQYGEALDDLLTAIKNKQNDLQAMHHKYVPIAVKIAPDLSEEELIQVADSLVRHNIDGVIATNTTLDRSLVQGMKNCDQTGGLSGRPLQLKSTEIIRRLSQELNGRLPIIGVGGIDSVIAAREKIAAGASLVQIYSGFIFKGPPLIKEIVTHI</sequence>
<evidence type="ECO:0000255" key="1">
    <source>
        <dbReference type="HAMAP-Rule" id="MF_00225"/>
    </source>
</evidence>
<dbReference type="EC" id="1.3.5.2" evidence="1"/>
<dbReference type="EMBL" id="CU928163">
    <property type="protein sequence ID" value="CAR12343.1"/>
    <property type="molecule type" value="Genomic_DNA"/>
</dbReference>
<dbReference type="RefSeq" id="WP_001305914.1">
    <property type="nucleotide sequence ID" value="NC_011751.1"/>
</dbReference>
<dbReference type="RefSeq" id="YP_002411887.1">
    <property type="nucleotide sequence ID" value="NC_011751.1"/>
</dbReference>
<dbReference type="SMR" id="B7N3A7"/>
<dbReference type="STRING" id="585056.ECUMN_1134"/>
<dbReference type="KEGG" id="eum:ECUMN_1134"/>
<dbReference type="PATRIC" id="fig|585056.7.peg.1331"/>
<dbReference type="HOGENOM" id="CLU_013640_2_0_6"/>
<dbReference type="UniPathway" id="UPA00070">
    <property type="reaction ID" value="UER00946"/>
</dbReference>
<dbReference type="Proteomes" id="UP000007097">
    <property type="component" value="Chromosome"/>
</dbReference>
<dbReference type="GO" id="GO:0005737">
    <property type="term" value="C:cytoplasm"/>
    <property type="evidence" value="ECO:0007669"/>
    <property type="project" value="InterPro"/>
</dbReference>
<dbReference type="GO" id="GO:0005886">
    <property type="term" value="C:plasma membrane"/>
    <property type="evidence" value="ECO:0007669"/>
    <property type="project" value="UniProtKB-SubCell"/>
</dbReference>
<dbReference type="GO" id="GO:0106430">
    <property type="term" value="F:dihydroorotate dehydrogenase (quinone) activity"/>
    <property type="evidence" value="ECO:0007669"/>
    <property type="project" value="UniProtKB-EC"/>
</dbReference>
<dbReference type="GO" id="GO:0006207">
    <property type="term" value="P:'de novo' pyrimidine nucleobase biosynthetic process"/>
    <property type="evidence" value="ECO:0007669"/>
    <property type="project" value="InterPro"/>
</dbReference>
<dbReference type="GO" id="GO:0044205">
    <property type="term" value="P:'de novo' UMP biosynthetic process"/>
    <property type="evidence" value="ECO:0007669"/>
    <property type="project" value="UniProtKB-UniRule"/>
</dbReference>
<dbReference type="CDD" id="cd04738">
    <property type="entry name" value="DHOD_2_like"/>
    <property type="match status" value="1"/>
</dbReference>
<dbReference type="FunFam" id="3.20.20.70:FF:000028">
    <property type="entry name" value="Dihydroorotate dehydrogenase (quinone)"/>
    <property type="match status" value="1"/>
</dbReference>
<dbReference type="Gene3D" id="3.20.20.70">
    <property type="entry name" value="Aldolase class I"/>
    <property type="match status" value="1"/>
</dbReference>
<dbReference type="HAMAP" id="MF_00225">
    <property type="entry name" value="DHO_dh_type2"/>
    <property type="match status" value="1"/>
</dbReference>
<dbReference type="InterPro" id="IPR013785">
    <property type="entry name" value="Aldolase_TIM"/>
</dbReference>
<dbReference type="InterPro" id="IPR050074">
    <property type="entry name" value="DHO_dehydrogenase"/>
</dbReference>
<dbReference type="InterPro" id="IPR012135">
    <property type="entry name" value="Dihydroorotate_DH_1_2"/>
</dbReference>
<dbReference type="InterPro" id="IPR005719">
    <property type="entry name" value="Dihydroorotate_DH_2"/>
</dbReference>
<dbReference type="InterPro" id="IPR005720">
    <property type="entry name" value="Dihydroorotate_DH_cat"/>
</dbReference>
<dbReference type="InterPro" id="IPR001295">
    <property type="entry name" value="Dihydroorotate_DH_CS"/>
</dbReference>
<dbReference type="NCBIfam" id="NF003644">
    <property type="entry name" value="PRK05286.1-1"/>
    <property type="match status" value="1"/>
</dbReference>
<dbReference type="NCBIfam" id="NF003645">
    <property type="entry name" value="PRK05286.1-2"/>
    <property type="match status" value="1"/>
</dbReference>
<dbReference type="NCBIfam" id="NF003646">
    <property type="entry name" value="PRK05286.1-4"/>
    <property type="match status" value="1"/>
</dbReference>
<dbReference type="NCBIfam" id="NF003652">
    <property type="entry name" value="PRK05286.2-5"/>
    <property type="match status" value="1"/>
</dbReference>
<dbReference type="NCBIfam" id="TIGR01036">
    <property type="entry name" value="pyrD_sub2"/>
    <property type="match status" value="1"/>
</dbReference>
<dbReference type="PANTHER" id="PTHR48109:SF4">
    <property type="entry name" value="DIHYDROOROTATE DEHYDROGENASE (QUINONE), MITOCHONDRIAL"/>
    <property type="match status" value="1"/>
</dbReference>
<dbReference type="PANTHER" id="PTHR48109">
    <property type="entry name" value="DIHYDROOROTATE DEHYDROGENASE (QUINONE), MITOCHONDRIAL-RELATED"/>
    <property type="match status" value="1"/>
</dbReference>
<dbReference type="Pfam" id="PF01180">
    <property type="entry name" value="DHO_dh"/>
    <property type="match status" value="1"/>
</dbReference>
<dbReference type="PIRSF" id="PIRSF000164">
    <property type="entry name" value="DHO_oxidase"/>
    <property type="match status" value="1"/>
</dbReference>
<dbReference type="SUPFAM" id="SSF51395">
    <property type="entry name" value="FMN-linked oxidoreductases"/>
    <property type="match status" value="1"/>
</dbReference>
<dbReference type="PROSITE" id="PS00911">
    <property type="entry name" value="DHODEHASE_1"/>
    <property type="match status" value="1"/>
</dbReference>
<dbReference type="PROSITE" id="PS00912">
    <property type="entry name" value="DHODEHASE_2"/>
    <property type="match status" value="1"/>
</dbReference>